<sequence>MPSADATRGGGSAGSMGKGTLGAGDTLGHKSVLDKQRAAIEKLRAQNEQLKTELLLENKFSVRPGDPFAQALINRLQDEGDMLARKIVLEMRKTKMLDQQLSEMGSTLTTTRNNMGGIFSAKEQSTAVQKRIKLLENRLEKAYVKYNQSITHNKQLRESINNLRRERIMFESIQSNLERELAKLKRDMADMIQQANGAFEAREKAIGEMNALKAQADKEQQGFEEEWRQLTTIIEEDKKERERARAQELAMRERETQELLKMGTLSSAEKKKRITKGSWNVGYNKAMAQNVAAEKVEMYGQAFKRIQDATGIEDIDQLVNTFLAAEDQNYTLFNYVNEVNQEIEKLEDQINIMRGEINKYRETGRELDMTKSRELTEEEARLAASEAQSQLYEKRTDSALSMTTALKAGINDLFERIGCNTPAVRDLLGEEGVTEANLTAYLGIIEQRTNEILQIYAKRKAQQGTDGLAEALLAQPLTQPGNRIIIEPPSTTQEEEVEGLEPEPVEEDRPLTREHLESKVQRTLPRKLETAIKVRPAGADATGGKRGSPTRR</sequence>
<gene>
    <name type="primary">ODA1</name>
    <name type="synonym">DCC2</name>
    <name type="ORF">CHLREDRAFT_132719</name>
</gene>
<proteinExistence type="evidence at protein level"/>
<reference key="1">
    <citation type="journal article" date="2002" name="Mol. Biol. Cell">
        <title>The outer dynein arm-docking complex: composition and characterization of a subunit (oda1) necessary for outer arm assembly.</title>
        <authorList>
            <person name="Takada S."/>
            <person name="Wilkerson C.G."/>
            <person name="Wakabayashi K."/>
            <person name="Kamiya R."/>
            <person name="Witman G.B."/>
        </authorList>
    </citation>
    <scope>NUCLEOTIDE SEQUENCE [MRNA]</scope>
    <scope>PROTEIN SEQUENCE OF 60-75; 286-305 AND 460-481</scope>
    <scope>FUNCTION</scope>
    <scope>SUBCELLULAR LOCATION</scope>
    <scope>IDENTIFICATION IN THE OUTER DYNEIN ARM COMPLEX</scope>
    <scope>DISRUPTION PHENOTYPE</scope>
</reference>
<reference key="2">
    <citation type="journal article" date="2007" name="Science">
        <title>The Chlamydomonas genome reveals the evolution of key animal and plant functions.</title>
        <authorList>
            <person name="Merchant S.S."/>
            <person name="Prochnik S.E."/>
            <person name="Vallon O."/>
            <person name="Harris E.H."/>
            <person name="Karpowicz S.J."/>
            <person name="Witman G.B."/>
            <person name="Terry A."/>
            <person name="Salamov A."/>
            <person name="Fritz-Laylin L.K."/>
            <person name="Marechal-Drouard L."/>
            <person name="Marshall W.F."/>
            <person name="Qu L.H."/>
            <person name="Nelson D.R."/>
            <person name="Sanderfoot A.A."/>
            <person name="Spalding M.H."/>
            <person name="Kapitonov V.V."/>
            <person name="Ren Q."/>
            <person name="Ferris P."/>
            <person name="Lindquist E."/>
            <person name="Shapiro H."/>
            <person name="Lucas S.M."/>
            <person name="Grimwood J."/>
            <person name="Schmutz J."/>
            <person name="Cardol P."/>
            <person name="Cerutti H."/>
            <person name="Chanfreau G."/>
            <person name="Chen C.L."/>
            <person name="Cognat V."/>
            <person name="Croft M.T."/>
            <person name="Dent R."/>
            <person name="Dutcher S."/>
            <person name="Fernandez E."/>
            <person name="Fukuzawa H."/>
            <person name="Gonzalez-Ballester D."/>
            <person name="Gonzalez-Halphen D."/>
            <person name="Hallmann A."/>
            <person name="Hanikenne M."/>
            <person name="Hippler M."/>
            <person name="Inwood W."/>
            <person name="Jabbari K."/>
            <person name="Kalanon M."/>
            <person name="Kuras R."/>
            <person name="Lefebvre P.A."/>
            <person name="Lemaire S.D."/>
            <person name="Lobanov A.V."/>
            <person name="Lohr M."/>
            <person name="Manuell A."/>
            <person name="Meier I."/>
            <person name="Mets L."/>
            <person name="Mittag M."/>
            <person name="Mittelmeier T."/>
            <person name="Moroney J.V."/>
            <person name="Moseley J."/>
            <person name="Napoli C."/>
            <person name="Nedelcu A.M."/>
            <person name="Niyogi K."/>
            <person name="Novoselov S.V."/>
            <person name="Paulsen I.T."/>
            <person name="Pazour G.J."/>
            <person name="Purton S."/>
            <person name="Ral J.P."/>
            <person name="Riano-Pachon D.M."/>
            <person name="Riekhof W."/>
            <person name="Rymarquis L."/>
            <person name="Schroda M."/>
            <person name="Stern D."/>
            <person name="Umen J."/>
            <person name="Willows R."/>
            <person name="Wilson N."/>
            <person name="Zimmer S.L."/>
            <person name="Allmer J."/>
            <person name="Balk J."/>
            <person name="Bisova K."/>
            <person name="Chen C.J."/>
            <person name="Elias M."/>
            <person name="Gendler K."/>
            <person name="Hauser C."/>
            <person name="Lamb M.R."/>
            <person name="Ledford H."/>
            <person name="Long J.C."/>
            <person name="Minagawa J."/>
            <person name="Page M.D."/>
            <person name="Pan J."/>
            <person name="Pootakham W."/>
            <person name="Roje S."/>
            <person name="Rose A."/>
            <person name="Stahlberg E."/>
            <person name="Terauchi A.M."/>
            <person name="Yang P."/>
            <person name="Ball S."/>
            <person name="Bowler C."/>
            <person name="Dieckmann C.L."/>
            <person name="Gladyshev V.N."/>
            <person name="Green P."/>
            <person name="Jorgensen R."/>
            <person name="Mayfield S."/>
            <person name="Mueller-Roeber B."/>
            <person name="Rajamani S."/>
            <person name="Sayre R.T."/>
            <person name="Brokstein P."/>
            <person name="Dubchak I."/>
            <person name="Goodstein D."/>
            <person name="Hornick L."/>
            <person name="Huang Y.W."/>
            <person name="Jhaveri J."/>
            <person name="Luo Y."/>
            <person name="Martinez D."/>
            <person name="Ngau W.C."/>
            <person name="Otillar B."/>
            <person name="Poliakov A."/>
            <person name="Porter A."/>
            <person name="Szajkowski L."/>
            <person name="Werner G."/>
            <person name="Zhou K."/>
            <person name="Grigoriev I.V."/>
            <person name="Rokhsar D.S."/>
            <person name="Grossman A.R."/>
        </authorList>
    </citation>
    <scope>NUCLEOTIDE SEQUENCE [LARGE SCALE GENOMIC DNA]</scope>
    <source>
        <strain>CC-503</strain>
    </source>
</reference>
<dbReference type="EMBL" id="AY039618">
    <property type="protein sequence ID" value="AAK72125.1"/>
    <property type="molecule type" value="mRNA"/>
</dbReference>
<dbReference type="EMBL" id="DS496174">
    <property type="protein sequence ID" value="EDO97433.1"/>
    <property type="molecule type" value="Genomic_DNA"/>
</dbReference>
<dbReference type="RefSeq" id="XP_001701436.1">
    <property type="nucleotide sequence ID" value="XM_001701384.1"/>
</dbReference>
<dbReference type="PDB" id="6U42">
    <property type="method" value="EM"/>
    <property type="resolution" value="3.40 A"/>
    <property type="chains" value="7T/7U=1-552"/>
</dbReference>
<dbReference type="PDB" id="7KZM">
    <property type="method" value="EM"/>
    <property type="resolution" value="7.50 A"/>
    <property type="chains" value="Y/Y1=1-552"/>
</dbReference>
<dbReference type="PDB" id="7KZO">
    <property type="method" value="EM"/>
    <property type="resolution" value="3.30 A"/>
    <property type="chains" value="Y/Y1=1-552"/>
</dbReference>
<dbReference type="PDB" id="8GLV">
    <property type="method" value="EM"/>
    <property type="resolution" value="3.10 A"/>
    <property type="chains" value="Cc/Cd/Gk/MN/MX/MZ/Mb=1-552"/>
</dbReference>
<dbReference type="PDBsum" id="6U42"/>
<dbReference type="PDBsum" id="7KZM"/>
<dbReference type="PDBsum" id="7KZO"/>
<dbReference type="PDBsum" id="8GLV"/>
<dbReference type="EMDB" id="EMD-20631"/>
<dbReference type="EMDB" id="EMD-23082"/>
<dbReference type="EMDB" id="EMD-23084"/>
<dbReference type="EMDB" id="EMD-40220"/>
<dbReference type="SMR" id="A8JF70"/>
<dbReference type="IntAct" id="A8JF70">
    <property type="interactions" value="3"/>
</dbReference>
<dbReference type="MINT" id="A8JF70"/>
<dbReference type="PaxDb" id="3055-EDO97433"/>
<dbReference type="EnsemblPlants" id="PNW71716">
    <property type="protein sequence ID" value="PNW71716"/>
    <property type="gene ID" value="CHLRE_16g666150v5"/>
</dbReference>
<dbReference type="GeneID" id="5726980"/>
<dbReference type="Gramene" id="PNW71716">
    <property type="protein sequence ID" value="PNW71716"/>
    <property type="gene ID" value="CHLRE_16g666150v5"/>
</dbReference>
<dbReference type="KEGG" id="cre:CHLRE_16g666150v5"/>
<dbReference type="eggNOG" id="ENOG502QSIU">
    <property type="taxonomic scope" value="Eukaryota"/>
</dbReference>
<dbReference type="HOGENOM" id="CLU_027546_3_1_1"/>
<dbReference type="OMA" id="CYKDTIC"/>
<dbReference type="OrthoDB" id="6766775at2759"/>
<dbReference type="GO" id="GO:0036157">
    <property type="term" value="C:outer dynein arm"/>
    <property type="evidence" value="ECO:0000314"/>
    <property type="project" value="UniProtKB"/>
</dbReference>
<dbReference type="GO" id="GO:0060294">
    <property type="term" value="P:cilium movement involved in cell motility"/>
    <property type="evidence" value="ECO:0000315"/>
    <property type="project" value="GO_Central"/>
</dbReference>
<dbReference type="GO" id="GO:0036158">
    <property type="term" value="P:outer dynein arm assembly"/>
    <property type="evidence" value="ECO:0000315"/>
    <property type="project" value="UniProtKB"/>
</dbReference>
<dbReference type="InterPro" id="IPR051876">
    <property type="entry name" value="ODA-DC/CCD"/>
</dbReference>
<dbReference type="InterPro" id="IPR049258">
    <property type="entry name" value="ODAD1_CC"/>
</dbReference>
<dbReference type="PANTHER" id="PTHR21694">
    <property type="entry name" value="COILED-COIL DOMAIN-CONTAINING PROTEIN 63"/>
    <property type="match status" value="1"/>
</dbReference>
<dbReference type="PANTHER" id="PTHR21694:SF18">
    <property type="entry name" value="COILED-COIL DOMAIN-CONTAINING PROTEIN 63"/>
    <property type="match status" value="1"/>
</dbReference>
<dbReference type="Pfam" id="PF21773">
    <property type="entry name" value="ODAD1_CC"/>
    <property type="match status" value="1"/>
</dbReference>
<accession>A8JF70</accession>
<accession>Q8LGS5</accession>
<organism>
    <name type="scientific">Chlamydomonas reinhardtii</name>
    <name type="common">Chlamydomonas smithii</name>
    <dbReference type="NCBI Taxonomy" id="3055"/>
    <lineage>
        <taxon>Eukaryota</taxon>
        <taxon>Viridiplantae</taxon>
        <taxon>Chlorophyta</taxon>
        <taxon>core chlorophytes</taxon>
        <taxon>Chlorophyceae</taxon>
        <taxon>CS clade</taxon>
        <taxon>Chlamydomonadales</taxon>
        <taxon>Chlamydomonadaceae</taxon>
        <taxon>Chlamydomonas</taxon>
    </lineage>
</organism>
<feature type="chain" id="PRO_0000421993" description="Outer dynein arm protein 1">
    <location>
        <begin position="1"/>
        <end position="552"/>
    </location>
</feature>
<feature type="region of interest" description="Disordered" evidence="2">
    <location>
        <begin position="1"/>
        <end position="27"/>
    </location>
</feature>
<feature type="region of interest" description="Disordered" evidence="2">
    <location>
        <begin position="482"/>
        <end position="515"/>
    </location>
</feature>
<feature type="region of interest" description="Disordered" evidence="2">
    <location>
        <begin position="528"/>
        <end position="552"/>
    </location>
</feature>
<feature type="coiled-coil region" evidence="1">
    <location>
        <begin position="28"/>
        <end position="59"/>
    </location>
</feature>
<feature type="coiled-coil region" evidence="1">
    <location>
        <begin position="120"/>
        <end position="260"/>
    </location>
</feature>
<feature type="coiled-coil region" evidence="1">
    <location>
        <begin position="331"/>
        <end position="395"/>
    </location>
</feature>
<feature type="compositionally biased region" description="Gly residues" evidence="2">
    <location>
        <begin position="8"/>
        <end position="22"/>
    </location>
</feature>
<feature type="compositionally biased region" description="Acidic residues" evidence="2">
    <location>
        <begin position="493"/>
        <end position="506"/>
    </location>
</feature>
<feature type="sequence conflict" description="In Ref. 1; AAK72125." evidence="4" ref="1">
    <original>T</original>
    <variation>M</variation>
    <location>
        <position position="492"/>
    </location>
</feature>
<keyword id="KW-0002">3D-structure</keyword>
<keyword id="KW-0966">Cell projection</keyword>
<keyword id="KW-0969">Cilium</keyword>
<keyword id="KW-0175">Coiled coil</keyword>
<keyword id="KW-0963">Cytoplasm</keyword>
<keyword id="KW-0206">Cytoskeleton</keyword>
<keyword id="KW-0903">Direct protein sequencing</keyword>
<name>ODA1_CHLRE</name>
<protein>
    <recommendedName>
        <fullName>Outer dynein arm protein 1</fullName>
    </recommendedName>
    <alternativeName>
        <fullName>Docking complex component 2</fullName>
    </alternativeName>
</protein>
<comment type="function">
    <text evidence="3">Component of the outer dynein arm complex required for assembly of the outer dynein arm-docking complex (ODA-DC) and the outer dynein arm onto the doublet microtubule.</text>
</comment>
<comment type="subunit">
    <text evidence="3">Component of the outer dynein arm complex.</text>
</comment>
<comment type="interaction">
    <interactant intactId="EBI-8534735">
        <id>A8JF70</id>
    </interactant>
    <interactant intactId="EBI-8534794">
        <id>A8IPZ5</id>
        <label>CHLRE_17g703850v5</label>
    </interactant>
    <organismsDiffer>false</organismsDiffer>
    <experiments>3</experiments>
</comment>
<comment type="subcellular location">
    <subcellularLocation>
        <location evidence="3">Cytoplasm</location>
        <location evidence="3">Cytoskeleton</location>
        <location evidence="3">Cilium axoneme</location>
    </subcellularLocation>
</comment>
<comment type="disruption phenotype">
    <text evidence="3">Impaired motility and outer dynein arm defects.</text>
</comment>
<comment type="similarity">
    <text evidence="4">Belongs to the ODA1/DCC2 family.</text>
</comment>
<evidence type="ECO:0000255" key="1"/>
<evidence type="ECO:0000256" key="2">
    <source>
        <dbReference type="SAM" id="MobiDB-lite"/>
    </source>
</evidence>
<evidence type="ECO:0000269" key="3">
    <source>
    </source>
</evidence>
<evidence type="ECO:0000305" key="4"/>